<organism>
    <name type="scientific">Xenopus laevis</name>
    <name type="common">African clawed frog</name>
    <dbReference type="NCBI Taxonomy" id="8355"/>
    <lineage>
        <taxon>Eukaryota</taxon>
        <taxon>Metazoa</taxon>
        <taxon>Chordata</taxon>
        <taxon>Craniata</taxon>
        <taxon>Vertebrata</taxon>
        <taxon>Euteleostomi</taxon>
        <taxon>Amphibia</taxon>
        <taxon>Batrachia</taxon>
        <taxon>Anura</taxon>
        <taxon>Pipoidea</taxon>
        <taxon>Pipidae</taxon>
        <taxon>Xenopodinae</taxon>
        <taxon>Xenopus</taxon>
        <taxon>Xenopus</taxon>
    </lineage>
</organism>
<accession>Q09003</accession>
<accession>Q6GQG7</accession>
<dbReference type="EMBL" id="Z23011">
    <property type="protein sequence ID" value="CAA80553.1"/>
    <property type="molecule type" value="mRNA"/>
</dbReference>
<dbReference type="EMBL" id="BC072777">
    <property type="protein sequence ID" value="AAH72777.1"/>
    <property type="molecule type" value="mRNA"/>
</dbReference>
<dbReference type="PIR" id="A40676">
    <property type="entry name" value="A40676"/>
</dbReference>
<dbReference type="RefSeq" id="NP_001081591.1">
    <property type="nucleotide sequence ID" value="NM_001088122.1"/>
</dbReference>
<dbReference type="BioGRID" id="99276">
    <property type="interactions" value="1"/>
</dbReference>
<dbReference type="IntAct" id="Q09003">
    <property type="interactions" value="1"/>
</dbReference>
<dbReference type="DNASU" id="397940"/>
<dbReference type="GeneID" id="397940"/>
<dbReference type="KEGG" id="xla:397940"/>
<dbReference type="AGR" id="Xenbase:XB-GENE-6252163"/>
<dbReference type="CTD" id="397940"/>
<dbReference type="Xenbase" id="XB-GENE-6252163">
    <property type="gene designation" value="coil.L"/>
</dbReference>
<dbReference type="OrthoDB" id="74813at2759"/>
<dbReference type="Proteomes" id="UP000186698">
    <property type="component" value="Chromosome 9_10L"/>
</dbReference>
<dbReference type="Bgee" id="397940">
    <property type="expression patterns" value="Expressed in egg cell and 19 other cell types or tissues"/>
</dbReference>
<dbReference type="GO" id="GO:0015030">
    <property type="term" value="C:Cajal body"/>
    <property type="evidence" value="ECO:0000318"/>
    <property type="project" value="GO_Central"/>
</dbReference>
<dbReference type="GO" id="GO:0071601">
    <property type="term" value="C:sphere organelle"/>
    <property type="evidence" value="ECO:0000314"/>
    <property type="project" value="UniProtKB"/>
</dbReference>
<dbReference type="GO" id="GO:0030619">
    <property type="term" value="F:U1 snRNA binding"/>
    <property type="evidence" value="ECO:0000318"/>
    <property type="project" value="GO_Central"/>
</dbReference>
<dbReference type="GO" id="GO:0030620">
    <property type="term" value="F:U2 snRNA binding"/>
    <property type="evidence" value="ECO:0000318"/>
    <property type="project" value="GO_Central"/>
</dbReference>
<dbReference type="GO" id="GO:0000387">
    <property type="term" value="P:spliceosomal snRNP assembly"/>
    <property type="evidence" value="ECO:0000318"/>
    <property type="project" value="GO_Central"/>
</dbReference>
<dbReference type="InterPro" id="IPR024822">
    <property type="entry name" value="Coilin"/>
</dbReference>
<dbReference type="InterPro" id="IPR031722">
    <property type="entry name" value="Coilin_N"/>
</dbReference>
<dbReference type="InterPro" id="IPR056398">
    <property type="entry name" value="Tudor_Coilin"/>
</dbReference>
<dbReference type="PANTHER" id="PTHR15197:SF0">
    <property type="entry name" value="COILIN"/>
    <property type="match status" value="1"/>
</dbReference>
<dbReference type="PANTHER" id="PTHR15197">
    <property type="entry name" value="COILIN P80"/>
    <property type="match status" value="1"/>
</dbReference>
<dbReference type="Pfam" id="PF15862">
    <property type="entry name" value="Coilin_N"/>
    <property type="match status" value="1"/>
</dbReference>
<dbReference type="Pfam" id="PF23086">
    <property type="entry name" value="Tudor_Coilin"/>
    <property type="match status" value="1"/>
</dbReference>
<protein>
    <recommendedName>
        <fullName>Coilin</fullName>
    </recommendedName>
    <alternativeName>
        <fullName>Sphere organelles protein SPH-1</fullName>
        <shortName>Sphere protein 1</shortName>
    </alternativeName>
</protein>
<comment type="subcellular location">
    <subcellularLocation>
        <location evidence="3">Nucleus</location>
    </subcellularLocation>
    <text>Sphere organelles.</text>
</comment>
<comment type="tissue specificity">
    <text evidence="3">Expressed in both oocytes and somatic cells.</text>
</comment>
<comment type="domain">
    <text evidence="1">The atypical Tudor domain at the C-terminus contains two large unstructured loops, and doesn't bind methylated residues.</text>
</comment>
<comment type="similarity">
    <text evidence="4">Belongs to the coilin family.</text>
</comment>
<feature type="chain" id="PRO_0000072123" description="Coilin">
    <location>
        <begin position="1"/>
        <end position="536"/>
    </location>
</feature>
<feature type="repeat" description="1">
    <location>
        <begin position="353"/>
        <end position="358"/>
    </location>
</feature>
<feature type="repeat" description="2">
    <location>
        <begin position="380"/>
        <end position="385"/>
    </location>
</feature>
<feature type="domain" description="Tudor; atypical">
    <location>
        <begin position="425"/>
        <end position="523"/>
    </location>
</feature>
<feature type="region of interest" description="Disordered" evidence="2">
    <location>
        <begin position="96"/>
        <end position="316"/>
    </location>
</feature>
<feature type="region of interest" description="2 X 6 AA repeats of R-G-R-G-R-G">
    <location>
        <begin position="353"/>
        <end position="385"/>
    </location>
</feature>
<feature type="region of interest" description="Disordered" evidence="2">
    <location>
        <begin position="368"/>
        <end position="387"/>
    </location>
</feature>
<feature type="compositionally biased region" description="Basic residues" evidence="2">
    <location>
        <begin position="171"/>
        <end position="180"/>
    </location>
</feature>
<feature type="compositionally biased region" description="Basic and acidic residues" evidence="2">
    <location>
        <begin position="181"/>
        <end position="192"/>
    </location>
</feature>
<feature type="compositionally biased region" description="Low complexity" evidence="2">
    <location>
        <begin position="213"/>
        <end position="238"/>
    </location>
</feature>
<feature type="compositionally biased region" description="Polar residues" evidence="2">
    <location>
        <begin position="239"/>
        <end position="257"/>
    </location>
</feature>
<feature type="compositionally biased region" description="Polar residues" evidence="2">
    <location>
        <begin position="303"/>
        <end position="316"/>
    </location>
</feature>
<feature type="compositionally biased region" description="Low complexity" evidence="2">
    <location>
        <begin position="371"/>
        <end position="380"/>
    </location>
</feature>
<feature type="sequence conflict" description="In Ref. 1; CAA80553." evidence="4" ref="1">
    <original>D</original>
    <variation>N</variation>
    <location>
        <position position="51"/>
    </location>
</feature>
<feature type="sequence conflict" description="In Ref. 1; CAA80553." evidence="4" ref="1">
    <original>G</original>
    <variation>E</variation>
    <location>
        <position position="500"/>
    </location>
</feature>
<name>COIL_XENLA</name>
<gene>
    <name type="primary">coil</name>
    <name type="synonym">sph1</name>
</gene>
<reference key="1">
    <citation type="journal article" date="1993" name="J. Cell Biol.">
        <title>Identification and characterization of a sphere organelle protein.</title>
        <authorList>
            <person name="Tuma R.S."/>
            <person name="Stolk J.A."/>
            <person name="Roth M.B."/>
        </authorList>
    </citation>
    <scope>NUCLEOTIDE SEQUENCE [MRNA]</scope>
    <scope>SUBCELLULAR LOCATION</scope>
    <scope>TISSUE SPECIFICITY</scope>
    <source>
        <tissue>Oocyte</tissue>
    </source>
</reference>
<reference key="2">
    <citation type="submission" date="2004-06" db="EMBL/GenBank/DDBJ databases">
        <authorList>
            <consortium name="NIH - Xenopus Gene Collection (XGC) project"/>
        </authorList>
    </citation>
    <scope>NUCLEOTIDE SEQUENCE [LARGE SCALE MRNA]</scope>
    <source>
        <tissue>Ovary</tissue>
    </source>
</reference>
<evidence type="ECO:0000250" key="1"/>
<evidence type="ECO:0000256" key="2">
    <source>
        <dbReference type="SAM" id="MobiDB-lite"/>
    </source>
</evidence>
<evidence type="ECO:0000269" key="3">
    <source>
    </source>
</evidence>
<evidence type="ECO:0000305" key="4"/>
<sequence>MAAPSPVRVKLLFDYPPPAIPESCMFWLLLDAKRCRVVTDLASIIRHKYMDGQGGGISLYVEDCLLPPGESILVIRDNDSIRVKWDGAAIERNQEAETCNDGAQNKSKKRHWKKSEDECDSGHKRKKQKSSSTQVDLKSGKDGGIRDKRKPSPPMECNASDPEELRESGRKTHKGKRTKKKSEAPIENPPDKHSRKCPPQASNKALKLSWKRQTSSSDSSDTSSCSDQPTPTTQQKPQSSAKRQNQAATRESVTHSVSPKAVNGISSTKNKKADAPISSSDMDTAVGGNETLICPVPPEDLSTHIQQHSQSPTSDSAESIELVIKKSNASLSSLTDNRVAGVSDKLSPNVSGRGRGRGEDFSWRGQRGRWFRGQGNNSNRGRGRGDSSNVFYKYNTEKEKQQQLEESATNVSIIIQNPQETMKRDYSSLPLLAAAPQVGKLIAFKLLEVSENYTPEVSEYKEGKILSFDPVTKQIEMEIISQQTMRKPGKFDVVYQSEDGEDIVEYAVPQESKVMLNWNTLIEPRLLMEKESQVQC</sequence>
<proteinExistence type="evidence at transcript level"/>
<keyword id="KW-0539">Nucleus</keyword>
<keyword id="KW-1185">Reference proteome</keyword>
<keyword id="KW-0677">Repeat</keyword>